<protein>
    <recommendedName>
        <fullName evidence="1">Probable GTP-binding protein EngB</fullName>
    </recommendedName>
</protein>
<evidence type="ECO:0000255" key="1">
    <source>
        <dbReference type="HAMAP-Rule" id="MF_00321"/>
    </source>
</evidence>
<name>ENGB_SHEPC</name>
<comment type="function">
    <text evidence="1">Necessary for normal cell division and for the maintenance of normal septation.</text>
</comment>
<comment type="cofactor">
    <cofactor evidence="1">
        <name>Mg(2+)</name>
        <dbReference type="ChEBI" id="CHEBI:18420"/>
    </cofactor>
</comment>
<comment type="similarity">
    <text evidence="1">Belongs to the TRAFAC class TrmE-Era-EngA-EngB-Septin-like GTPase superfamily. EngB GTPase family.</text>
</comment>
<organism>
    <name type="scientific">Shewanella putrefaciens (strain CN-32 / ATCC BAA-453)</name>
    <dbReference type="NCBI Taxonomy" id="319224"/>
    <lineage>
        <taxon>Bacteria</taxon>
        <taxon>Pseudomonadati</taxon>
        <taxon>Pseudomonadota</taxon>
        <taxon>Gammaproteobacteria</taxon>
        <taxon>Alteromonadales</taxon>
        <taxon>Shewanellaceae</taxon>
        <taxon>Shewanella</taxon>
    </lineage>
</organism>
<proteinExistence type="inferred from homology"/>
<gene>
    <name evidence="1" type="primary">engB</name>
    <name type="ordered locus">Sputcn32_3907</name>
</gene>
<keyword id="KW-0131">Cell cycle</keyword>
<keyword id="KW-0132">Cell division</keyword>
<keyword id="KW-0342">GTP-binding</keyword>
<keyword id="KW-0460">Magnesium</keyword>
<keyword id="KW-0479">Metal-binding</keyword>
<keyword id="KW-0547">Nucleotide-binding</keyword>
<keyword id="KW-0717">Septation</keyword>
<dbReference type="EMBL" id="CP000681">
    <property type="protein sequence ID" value="ABP77613.1"/>
    <property type="molecule type" value="Genomic_DNA"/>
</dbReference>
<dbReference type="SMR" id="A4YCD0"/>
<dbReference type="STRING" id="319224.Sputcn32_3907"/>
<dbReference type="KEGG" id="spc:Sputcn32_3907"/>
<dbReference type="eggNOG" id="COG0218">
    <property type="taxonomic scope" value="Bacteria"/>
</dbReference>
<dbReference type="HOGENOM" id="CLU_033732_1_2_6"/>
<dbReference type="GO" id="GO:0005829">
    <property type="term" value="C:cytosol"/>
    <property type="evidence" value="ECO:0007669"/>
    <property type="project" value="TreeGrafter"/>
</dbReference>
<dbReference type="GO" id="GO:0005525">
    <property type="term" value="F:GTP binding"/>
    <property type="evidence" value="ECO:0007669"/>
    <property type="project" value="UniProtKB-UniRule"/>
</dbReference>
<dbReference type="GO" id="GO:0046872">
    <property type="term" value="F:metal ion binding"/>
    <property type="evidence" value="ECO:0007669"/>
    <property type="project" value="UniProtKB-KW"/>
</dbReference>
<dbReference type="GO" id="GO:0000917">
    <property type="term" value="P:division septum assembly"/>
    <property type="evidence" value="ECO:0007669"/>
    <property type="project" value="UniProtKB-KW"/>
</dbReference>
<dbReference type="CDD" id="cd01876">
    <property type="entry name" value="YihA_EngB"/>
    <property type="match status" value="1"/>
</dbReference>
<dbReference type="FunFam" id="3.40.50.300:FF:000098">
    <property type="entry name" value="Probable GTP-binding protein EngB"/>
    <property type="match status" value="1"/>
</dbReference>
<dbReference type="Gene3D" id="3.40.50.300">
    <property type="entry name" value="P-loop containing nucleotide triphosphate hydrolases"/>
    <property type="match status" value="1"/>
</dbReference>
<dbReference type="HAMAP" id="MF_00321">
    <property type="entry name" value="GTPase_EngB"/>
    <property type="match status" value="1"/>
</dbReference>
<dbReference type="InterPro" id="IPR030393">
    <property type="entry name" value="G_ENGB_dom"/>
</dbReference>
<dbReference type="InterPro" id="IPR006073">
    <property type="entry name" value="GTP-bd"/>
</dbReference>
<dbReference type="InterPro" id="IPR019987">
    <property type="entry name" value="GTP-bd_ribosome_bio_YsxC"/>
</dbReference>
<dbReference type="InterPro" id="IPR027417">
    <property type="entry name" value="P-loop_NTPase"/>
</dbReference>
<dbReference type="NCBIfam" id="TIGR03598">
    <property type="entry name" value="GTPase_YsxC"/>
    <property type="match status" value="1"/>
</dbReference>
<dbReference type="PANTHER" id="PTHR11649:SF13">
    <property type="entry name" value="ENGB-TYPE G DOMAIN-CONTAINING PROTEIN"/>
    <property type="match status" value="1"/>
</dbReference>
<dbReference type="PANTHER" id="PTHR11649">
    <property type="entry name" value="MSS1/TRME-RELATED GTP-BINDING PROTEIN"/>
    <property type="match status" value="1"/>
</dbReference>
<dbReference type="Pfam" id="PF01926">
    <property type="entry name" value="MMR_HSR1"/>
    <property type="match status" value="1"/>
</dbReference>
<dbReference type="SUPFAM" id="SSF52540">
    <property type="entry name" value="P-loop containing nucleoside triphosphate hydrolases"/>
    <property type="match status" value="1"/>
</dbReference>
<dbReference type="PROSITE" id="PS51706">
    <property type="entry name" value="G_ENGB"/>
    <property type="match status" value="1"/>
</dbReference>
<feature type="chain" id="PRO_1000005856" description="Probable GTP-binding protein EngB">
    <location>
        <begin position="1"/>
        <end position="219"/>
    </location>
</feature>
<feature type="domain" description="EngB-type G" evidence="1">
    <location>
        <begin position="31"/>
        <end position="205"/>
    </location>
</feature>
<feature type="binding site" evidence="1">
    <location>
        <begin position="39"/>
        <end position="46"/>
    </location>
    <ligand>
        <name>GTP</name>
        <dbReference type="ChEBI" id="CHEBI:37565"/>
    </ligand>
</feature>
<feature type="binding site" evidence="1">
    <location>
        <position position="46"/>
    </location>
    <ligand>
        <name>Mg(2+)</name>
        <dbReference type="ChEBI" id="CHEBI:18420"/>
    </ligand>
</feature>
<feature type="binding site" evidence="1">
    <location>
        <begin position="66"/>
        <end position="70"/>
    </location>
    <ligand>
        <name>GTP</name>
        <dbReference type="ChEBI" id="CHEBI:37565"/>
    </ligand>
</feature>
<feature type="binding site" evidence="1">
    <location>
        <position position="68"/>
    </location>
    <ligand>
        <name>Mg(2+)</name>
        <dbReference type="ChEBI" id="CHEBI:18420"/>
    </ligand>
</feature>
<feature type="binding site" evidence="1">
    <location>
        <begin position="84"/>
        <end position="87"/>
    </location>
    <ligand>
        <name>GTP</name>
        <dbReference type="ChEBI" id="CHEBI:37565"/>
    </ligand>
</feature>
<feature type="binding site" evidence="1">
    <location>
        <begin position="151"/>
        <end position="154"/>
    </location>
    <ligand>
        <name>GTP</name>
        <dbReference type="ChEBI" id="CHEBI:37565"/>
    </ligand>
</feature>
<feature type="binding site" evidence="1">
    <location>
        <begin position="184"/>
        <end position="186"/>
    </location>
    <ligand>
        <name>GTP</name>
        <dbReference type="ChEBI" id="CHEBI:37565"/>
    </ligand>
</feature>
<accession>A4YCD0</accession>
<reference key="1">
    <citation type="submission" date="2007-04" db="EMBL/GenBank/DDBJ databases">
        <title>Complete sequence of Shewanella putrefaciens CN-32.</title>
        <authorList>
            <consortium name="US DOE Joint Genome Institute"/>
            <person name="Copeland A."/>
            <person name="Lucas S."/>
            <person name="Lapidus A."/>
            <person name="Barry K."/>
            <person name="Detter J.C."/>
            <person name="Glavina del Rio T."/>
            <person name="Hammon N."/>
            <person name="Israni S."/>
            <person name="Dalin E."/>
            <person name="Tice H."/>
            <person name="Pitluck S."/>
            <person name="Chain P."/>
            <person name="Malfatti S."/>
            <person name="Shin M."/>
            <person name="Vergez L."/>
            <person name="Schmutz J."/>
            <person name="Larimer F."/>
            <person name="Land M."/>
            <person name="Hauser L."/>
            <person name="Kyrpides N."/>
            <person name="Mikhailova N."/>
            <person name="Romine M.F."/>
            <person name="Fredrickson J."/>
            <person name="Tiedje J."/>
            <person name="Richardson P."/>
        </authorList>
    </citation>
    <scope>NUCLEOTIDE SEQUENCE [LARGE SCALE GENOMIC DNA]</scope>
    <source>
        <strain>CN-32 / ATCC BAA-453</strain>
    </source>
</reference>
<sequence length="219" mass="24386">MTESHIDFRRAKFLISAPDIAHLDQYLPGDVGVEIAFAGRSNAGKSSALNALTEQKSLARTSKTPGRTQLINVFELDSQRRLVDLPGYGFAQVPLAMKNKWQQALGEYLQKRACLSGVVVLMDIRHPLKDLDMQMIEWAVASEIPVLALLTKSDKLAQSAKMKTVNEVRKALADFGDWVLVEPFSALKGTGKPKVLSILNEWCHPQWLRDELDTAEQSN</sequence>